<sequence>MSASGEISTPRDYIGHHLNHLQLDLRTFELVNPHSTGPATFWTLNIDSLFFSVVLGLAFLLVFRKVAASATSGVPGKLQTAVELIIGFVDNSVRDMYHGKSKVIAPLALTVFVWVLLMNMMDLLPIDLLPYIGEHVFGLPALRVVPTADVSITLSMALGVFILIIFYSIKMKGVGGFTKELTMQPFNHPIFIPVNLILEGVSLLSKPLSLGLRLFGNMYAGELIFILIAGLLPWWSQWMLSVPWAIFHILIITLQAFIFMVLTIVYLSMASEEH</sequence>
<name>ATP6_YERPA</name>
<gene>
    <name evidence="1" type="primary">atpB</name>
    <name type="ordered locus">YPA_4172</name>
</gene>
<evidence type="ECO:0000255" key="1">
    <source>
        <dbReference type="HAMAP-Rule" id="MF_01393"/>
    </source>
</evidence>
<keyword id="KW-0066">ATP synthesis</keyword>
<keyword id="KW-0997">Cell inner membrane</keyword>
<keyword id="KW-1003">Cell membrane</keyword>
<keyword id="KW-0138">CF(0)</keyword>
<keyword id="KW-0375">Hydrogen ion transport</keyword>
<keyword id="KW-0406">Ion transport</keyword>
<keyword id="KW-0472">Membrane</keyword>
<keyword id="KW-0812">Transmembrane</keyword>
<keyword id="KW-1133">Transmembrane helix</keyword>
<keyword id="KW-0813">Transport</keyword>
<organism>
    <name type="scientific">Yersinia pestis bv. Antiqua (strain Antiqua)</name>
    <dbReference type="NCBI Taxonomy" id="360102"/>
    <lineage>
        <taxon>Bacteria</taxon>
        <taxon>Pseudomonadati</taxon>
        <taxon>Pseudomonadota</taxon>
        <taxon>Gammaproteobacteria</taxon>
        <taxon>Enterobacterales</taxon>
        <taxon>Yersiniaceae</taxon>
        <taxon>Yersinia</taxon>
    </lineage>
</organism>
<comment type="function">
    <text evidence="1">Key component of the proton channel; it plays a direct role in the translocation of protons across the membrane.</text>
</comment>
<comment type="subunit">
    <text evidence="1">F-type ATPases have 2 components, CF(1) - the catalytic core - and CF(0) - the membrane proton channel. CF(1) has five subunits: alpha(3), beta(3), gamma(1), delta(1), epsilon(1). CF(0) has three main subunits: a(1), b(2) and c(9-12). The alpha and beta chains form an alternating ring which encloses part of the gamma chain. CF(1) is attached to CF(0) by a central stalk formed by the gamma and epsilon chains, while a peripheral stalk is formed by the delta and b chains.</text>
</comment>
<comment type="subcellular location">
    <subcellularLocation>
        <location evidence="1">Cell inner membrane</location>
        <topology evidence="1">Multi-pass membrane protein</topology>
    </subcellularLocation>
</comment>
<comment type="similarity">
    <text evidence="1">Belongs to the ATPase A chain family.</text>
</comment>
<proteinExistence type="inferred from homology"/>
<reference key="1">
    <citation type="journal article" date="2006" name="J. Bacteriol.">
        <title>Complete genome sequence of Yersinia pestis strains Antiqua and Nepal516: evidence of gene reduction in an emerging pathogen.</title>
        <authorList>
            <person name="Chain P.S.G."/>
            <person name="Hu P."/>
            <person name="Malfatti S.A."/>
            <person name="Radnedge L."/>
            <person name="Larimer F."/>
            <person name="Vergez L.M."/>
            <person name="Worsham P."/>
            <person name="Chu M.C."/>
            <person name="Andersen G.L."/>
        </authorList>
    </citation>
    <scope>NUCLEOTIDE SEQUENCE [LARGE SCALE GENOMIC DNA]</scope>
    <source>
        <strain>Antiqua</strain>
    </source>
</reference>
<feature type="chain" id="PRO_0000362516" description="ATP synthase subunit a">
    <location>
        <begin position="1"/>
        <end position="274"/>
    </location>
</feature>
<feature type="transmembrane region" description="Helical" evidence="1">
    <location>
        <begin position="43"/>
        <end position="63"/>
    </location>
</feature>
<feature type="transmembrane region" description="Helical" evidence="1">
    <location>
        <begin position="103"/>
        <end position="123"/>
    </location>
</feature>
<feature type="transmembrane region" description="Helical" evidence="1">
    <location>
        <begin position="149"/>
        <end position="169"/>
    </location>
</feature>
<feature type="transmembrane region" description="Helical" evidence="1">
    <location>
        <begin position="223"/>
        <end position="243"/>
    </location>
</feature>
<feature type="transmembrane region" description="Helical" evidence="1">
    <location>
        <begin position="245"/>
        <end position="265"/>
    </location>
</feature>
<protein>
    <recommendedName>
        <fullName evidence="1">ATP synthase subunit a</fullName>
    </recommendedName>
    <alternativeName>
        <fullName evidence="1">ATP synthase F0 sector subunit a</fullName>
    </alternativeName>
    <alternativeName>
        <fullName evidence="1">F-ATPase subunit 6</fullName>
    </alternativeName>
</protein>
<dbReference type="EMBL" id="CP000308">
    <property type="protein sequence ID" value="ABG16133.1"/>
    <property type="molecule type" value="Genomic_DNA"/>
</dbReference>
<dbReference type="RefSeq" id="WP_002228150.1">
    <property type="nucleotide sequence ID" value="NZ_CP009906.1"/>
</dbReference>
<dbReference type="SMR" id="Q1C089"/>
<dbReference type="GeneID" id="96663465"/>
<dbReference type="KEGG" id="ypa:YPA_4172"/>
<dbReference type="Proteomes" id="UP000001971">
    <property type="component" value="Chromosome"/>
</dbReference>
<dbReference type="GO" id="GO:0005886">
    <property type="term" value="C:plasma membrane"/>
    <property type="evidence" value="ECO:0007669"/>
    <property type="project" value="UniProtKB-SubCell"/>
</dbReference>
<dbReference type="GO" id="GO:0045259">
    <property type="term" value="C:proton-transporting ATP synthase complex"/>
    <property type="evidence" value="ECO:0007669"/>
    <property type="project" value="UniProtKB-KW"/>
</dbReference>
<dbReference type="GO" id="GO:0046933">
    <property type="term" value="F:proton-transporting ATP synthase activity, rotational mechanism"/>
    <property type="evidence" value="ECO:0007669"/>
    <property type="project" value="UniProtKB-UniRule"/>
</dbReference>
<dbReference type="GO" id="GO:0042777">
    <property type="term" value="P:proton motive force-driven plasma membrane ATP synthesis"/>
    <property type="evidence" value="ECO:0007669"/>
    <property type="project" value="TreeGrafter"/>
</dbReference>
<dbReference type="CDD" id="cd00310">
    <property type="entry name" value="ATP-synt_Fo_a_6"/>
    <property type="match status" value="1"/>
</dbReference>
<dbReference type="FunFam" id="1.20.120.220:FF:000002">
    <property type="entry name" value="ATP synthase subunit a"/>
    <property type="match status" value="1"/>
</dbReference>
<dbReference type="Gene3D" id="1.20.120.220">
    <property type="entry name" value="ATP synthase, F0 complex, subunit A"/>
    <property type="match status" value="1"/>
</dbReference>
<dbReference type="HAMAP" id="MF_01393">
    <property type="entry name" value="ATP_synth_a_bact"/>
    <property type="match status" value="1"/>
</dbReference>
<dbReference type="InterPro" id="IPR045082">
    <property type="entry name" value="ATP_syn_F0_a_bact/chloroplast"/>
</dbReference>
<dbReference type="InterPro" id="IPR000568">
    <property type="entry name" value="ATP_synth_F0_asu"/>
</dbReference>
<dbReference type="InterPro" id="IPR023011">
    <property type="entry name" value="ATP_synth_F0_asu_AS"/>
</dbReference>
<dbReference type="InterPro" id="IPR035908">
    <property type="entry name" value="F0_ATP_A_sf"/>
</dbReference>
<dbReference type="NCBIfam" id="TIGR01131">
    <property type="entry name" value="ATP_synt_6_or_A"/>
    <property type="match status" value="1"/>
</dbReference>
<dbReference type="NCBIfam" id="NF004477">
    <property type="entry name" value="PRK05815.1-1"/>
    <property type="match status" value="1"/>
</dbReference>
<dbReference type="PANTHER" id="PTHR42823">
    <property type="entry name" value="ATP SYNTHASE SUBUNIT A, CHLOROPLASTIC"/>
    <property type="match status" value="1"/>
</dbReference>
<dbReference type="PANTHER" id="PTHR42823:SF3">
    <property type="entry name" value="ATP SYNTHASE SUBUNIT A, CHLOROPLASTIC"/>
    <property type="match status" value="1"/>
</dbReference>
<dbReference type="Pfam" id="PF00119">
    <property type="entry name" value="ATP-synt_A"/>
    <property type="match status" value="1"/>
</dbReference>
<dbReference type="PRINTS" id="PR00123">
    <property type="entry name" value="ATPASEA"/>
</dbReference>
<dbReference type="SUPFAM" id="SSF81336">
    <property type="entry name" value="F1F0 ATP synthase subunit A"/>
    <property type="match status" value="1"/>
</dbReference>
<dbReference type="PROSITE" id="PS00449">
    <property type="entry name" value="ATPASE_A"/>
    <property type="match status" value="1"/>
</dbReference>
<accession>Q1C089</accession>